<accession>A3ND57</accession>
<reference key="1">
    <citation type="journal article" date="2010" name="Genome Biol. Evol.">
        <title>Continuing evolution of Burkholderia mallei through genome reduction and large-scale rearrangements.</title>
        <authorList>
            <person name="Losada L."/>
            <person name="Ronning C.M."/>
            <person name="DeShazer D."/>
            <person name="Woods D."/>
            <person name="Fedorova N."/>
            <person name="Kim H.S."/>
            <person name="Shabalina S.A."/>
            <person name="Pearson T.R."/>
            <person name="Brinkac L."/>
            <person name="Tan P."/>
            <person name="Nandi T."/>
            <person name="Crabtree J."/>
            <person name="Badger J."/>
            <person name="Beckstrom-Sternberg S."/>
            <person name="Saqib M."/>
            <person name="Schutzer S.E."/>
            <person name="Keim P."/>
            <person name="Nierman W.C."/>
        </authorList>
    </citation>
    <scope>NUCLEOTIDE SEQUENCE [LARGE SCALE GENOMIC DNA]</scope>
    <source>
        <strain>668</strain>
    </source>
</reference>
<feature type="chain" id="PRO_1000046430" description="Phosphoribosylformylglycinamidine cyclo-ligase">
    <location>
        <begin position="1"/>
        <end position="351"/>
    </location>
</feature>
<evidence type="ECO:0000255" key="1">
    <source>
        <dbReference type="HAMAP-Rule" id="MF_00741"/>
    </source>
</evidence>
<sequence length="351" mass="36971">MNPPKSAPDAQGLSYRDAGVDIDAGDALVDKIKPFAKKTLRDGVLGGIGGFGALFEVPKKYREPVLVSGTDGVGTKLKLAFHLNKHDTVGQDLVAMSVNDILVQGAEPLFFLDYFACGRLDVETAATVVKGIATGCELAGCALIGGETAEMPSMYPDGEYDLAGFAVGAVEKSKIIDGSTIAEGDVVLGLASSGIHSNGFSLVRKIIERANPDLSADFHGRSLADALMAPTRIYVKPLLALMEKIAVKGMAHITGGGLVENIPRVLRDGLTAELDQHAWPLPPLFQWLQQHGGVADAEMHRVFNCGIGMAVIVSAADADDALRQLADAGEQVWKIGTVRASREGEAQTVVV</sequence>
<keyword id="KW-0067">ATP-binding</keyword>
<keyword id="KW-0963">Cytoplasm</keyword>
<keyword id="KW-0436">Ligase</keyword>
<keyword id="KW-0547">Nucleotide-binding</keyword>
<keyword id="KW-0658">Purine biosynthesis</keyword>
<comment type="catalytic activity">
    <reaction evidence="1">
        <text>2-formamido-N(1)-(5-O-phospho-beta-D-ribosyl)acetamidine + ATP = 5-amino-1-(5-phospho-beta-D-ribosyl)imidazole + ADP + phosphate + H(+)</text>
        <dbReference type="Rhea" id="RHEA:23032"/>
        <dbReference type="ChEBI" id="CHEBI:15378"/>
        <dbReference type="ChEBI" id="CHEBI:30616"/>
        <dbReference type="ChEBI" id="CHEBI:43474"/>
        <dbReference type="ChEBI" id="CHEBI:137981"/>
        <dbReference type="ChEBI" id="CHEBI:147287"/>
        <dbReference type="ChEBI" id="CHEBI:456216"/>
        <dbReference type="EC" id="6.3.3.1"/>
    </reaction>
</comment>
<comment type="pathway">
    <text evidence="1">Purine metabolism; IMP biosynthesis via de novo pathway; 5-amino-1-(5-phospho-D-ribosyl)imidazole from N(2)-formyl-N(1)-(5-phospho-D-ribosyl)glycinamide: step 2/2.</text>
</comment>
<comment type="subcellular location">
    <subcellularLocation>
        <location evidence="1">Cytoplasm</location>
    </subcellularLocation>
</comment>
<comment type="similarity">
    <text evidence="1">Belongs to the AIR synthase family.</text>
</comment>
<dbReference type="EC" id="6.3.3.1" evidence="1"/>
<dbReference type="EMBL" id="CP000570">
    <property type="protein sequence ID" value="ABN85045.1"/>
    <property type="molecule type" value="Genomic_DNA"/>
</dbReference>
<dbReference type="RefSeq" id="WP_011852152.1">
    <property type="nucleotide sequence ID" value="NC_009074.1"/>
</dbReference>
<dbReference type="SMR" id="A3ND57"/>
<dbReference type="KEGG" id="bpd:BURPS668_3267"/>
<dbReference type="HOGENOM" id="CLU_047116_0_0_4"/>
<dbReference type="UniPathway" id="UPA00074">
    <property type="reaction ID" value="UER00129"/>
</dbReference>
<dbReference type="GO" id="GO:0005829">
    <property type="term" value="C:cytosol"/>
    <property type="evidence" value="ECO:0007669"/>
    <property type="project" value="TreeGrafter"/>
</dbReference>
<dbReference type="GO" id="GO:0005524">
    <property type="term" value="F:ATP binding"/>
    <property type="evidence" value="ECO:0007669"/>
    <property type="project" value="UniProtKB-KW"/>
</dbReference>
<dbReference type="GO" id="GO:0004637">
    <property type="term" value="F:phosphoribosylamine-glycine ligase activity"/>
    <property type="evidence" value="ECO:0007669"/>
    <property type="project" value="TreeGrafter"/>
</dbReference>
<dbReference type="GO" id="GO:0004641">
    <property type="term" value="F:phosphoribosylformylglycinamidine cyclo-ligase activity"/>
    <property type="evidence" value="ECO:0007669"/>
    <property type="project" value="UniProtKB-UniRule"/>
</dbReference>
<dbReference type="GO" id="GO:0006189">
    <property type="term" value="P:'de novo' IMP biosynthetic process"/>
    <property type="evidence" value="ECO:0007669"/>
    <property type="project" value="UniProtKB-UniRule"/>
</dbReference>
<dbReference type="GO" id="GO:0046084">
    <property type="term" value="P:adenine biosynthetic process"/>
    <property type="evidence" value="ECO:0007669"/>
    <property type="project" value="TreeGrafter"/>
</dbReference>
<dbReference type="CDD" id="cd02196">
    <property type="entry name" value="PurM"/>
    <property type="match status" value="1"/>
</dbReference>
<dbReference type="FunFam" id="3.30.1330.10:FF:000001">
    <property type="entry name" value="Phosphoribosylformylglycinamidine cyclo-ligase"/>
    <property type="match status" value="1"/>
</dbReference>
<dbReference type="FunFam" id="3.90.650.10:FF:000001">
    <property type="entry name" value="Phosphoribosylformylglycinamidine cyclo-ligase"/>
    <property type="match status" value="1"/>
</dbReference>
<dbReference type="Gene3D" id="3.90.650.10">
    <property type="entry name" value="PurM-like C-terminal domain"/>
    <property type="match status" value="1"/>
</dbReference>
<dbReference type="Gene3D" id="3.30.1330.10">
    <property type="entry name" value="PurM-like, N-terminal domain"/>
    <property type="match status" value="1"/>
</dbReference>
<dbReference type="HAMAP" id="MF_00741">
    <property type="entry name" value="AIRS"/>
    <property type="match status" value="1"/>
</dbReference>
<dbReference type="InterPro" id="IPR010918">
    <property type="entry name" value="PurM-like_C_dom"/>
</dbReference>
<dbReference type="InterPro" id="IPR036676">
    <property type="entry name" value="PurM-like_C_sf"/>
</dbReference>
<dbReference type="InterPro" id="IPR016188">
    <property type="entry name" value="PurM-like_N"/>
</dbReference>
<dbReference type="InterPro" id="IPR036921">
    <property type="entry name" value="PurM-like_N_sf"/>
</dbReference>
<dbReference type="InterPro" id="IPR004733">
    <property type="entry name" value="PurM_cligase"/>
</dbReference>
<dbReference type="NCBIfam" id="TIGR00878">
    <property type="entry name" value="purM"/>
    <property type="match status" value="1"/>
</dbReference>
<dbReference type="PANTHER" id="PTHR10520:SF12">
    <property type="entry name" value="TRIFUNCTIONAL PURINE BIOSYNTHETIC PROTEIN ADENOSINE-3"/>
    <property type="match status" value="1"/>
</dbReference>
<dbReference type="PANTHER" id="PTHR10520">
    <property type="entry name" value="TRIFUNCTIONAL PURINE BIOSYNTHETIC PROTEIN ADENOSINE-3-RELATED"/>
    <property type="match status" value="1"/>
</dbReference>
<dbReference type="Pfam" id="PF00586">
    <property type="entry name" value="AIRS"/>
    <property type="match status" value="1"/>
</dbReference>
<dbReference type="Pfam" id="PF02769">
    <property type="entry name" value="AIRS_C"/>
    <property type="match status" value="1"/>
</dbReference>
<dbReference type="SUPFAM" id="SSF56042">
    <property type="entry name" value="PurM C-terminal domain-like"/>
    <property type="match status" value="1"/>
</dbReference>
<dbReference type="SUPFAM" id="SSF55326">
    <property type="entry name" value="PurM N-terminal domain-like"/>
    <property type="match status" value="1"/>
</dbReference>
<gene>
    <name evidence="1" type="primary">purM</name>
    <name type="ordered locus">BURPS668_3267</name>
</gene>
<protein>
    <recommendedName>
        <fullName evidence="1">Phosphoribosylformylglycinamidine cyclo-ligase</fullName>
        <ecNumber evidence="1">6.3.3.1</ecNumber>
    </recommendedName>
    <alternativeName>
        <fullName evidence="1">AIR synthase</fullName>
    </alternativeName>
    <alternativeName>
        <fullName evidence="1">AIRS</fullName>
    </alternativeName>
    <alternativeName>
        <fullName evidence="1">Phosphoribosyl-aminoimidazole synthetase</fullName>
    </alternativeName>
</protein>
<organism>
    <name type="scientific">Burkholderia pseudomallei (strain 668)</name>
    <dbReference type="NCBI Taxonomy" id="320373"/>
    <lineage>
        <taxon>Bacteria</taxon>
        <taxon>Pseudomonadati</taxon>
        <taxon>Pseudomonadota</taxon>
        <taxon>Betaproteobacteria</taxon>
        <taxon>Burkholderiales</taxon>
        <taxon>Burkholderiaceae</taxon>
        <taxon>Burkholderia</taxon>
        <taxon>pseudomallei group</taxon>
    </lineage>
</organism>
<name>PUR5_BURP6</name>
<proteinExistence type="inferred from homology"/>